<feature type="chain" id="PRO_0000390106" description="NADH-quinone oxidoreductase subunit K">
    <location>
        <begin position="1"/>
        <end position="101"/>
    </location>
</feature>
<feature type="transmembrane region" description="Helical" evidence="1">
    <location>
        <begin position="4"/>
        <end position="24"/>
    </location>
</feature>
<feature type="transmembrane region" description="Helical" evidence="1">
    <location>
        <begin position="29"/>
        <end position="49"/>
    </location>
</feature>
<feature type="transmembrane region" description="Helical" evidence="1">
    <location>
        <begin position="61"/>
        <end position="81"/>
    </location>
</feature>
<sequence>MIPVYDYLVLGVILFGLSLVGIMLNRKNIILLLVCVELMLLAVNTNFIAFSHYYNEVGGQVFVFFILTVAAAEAAIGLAIVMLLYRNRGNIDVDKMNHLKG</sequence>
<organism>
    <name type="scientific">Legionella pneumophila subsp. pneumophila (strain Philadelphia 1 / ATCC 33152 / DSM 7513)</name>
    <dbReference type="NCBI Taxonomy" id="272624"/>
    <lineage>
        <taxon>Bacteria</taxon>
        <taxon>Pseudomonadati</taxon>
        <taxon>Pseudomonadota</taxon>
        <taxon>Gammaproteobacteria</taxon>
        <taxon>Legionellales</taxon>
        <taxon>Legionellaceae</taxon>
        <taxon>Legionella</taxon>
    </lineage>
</organism>
<protein>
    <recommendedName>
        <fullName evidence="1">NADH-quinone oxidoreductase subunit K</fullName>
        <ecNumber evidence="1">7.1.1.-</ecNumber>
    </recommendedName>
    <alternativeName>
        <fullName evidence="1">NADH dehydrogenase I subunit K</fullName>
    </alternativeName>
    <alternativeName>
        <fullName evidence="1">NDH-1 subunit K</fullName>
    </alternativeName>
</protein>
<gene>
    <name evidence="1" type="primary">nuoK</name>
    <name type="ordered locus">lpg2779</name>
</gene>
<reference key="1">
    <citation type="journal article" date="2004" name="Science">
        <title>The genomic sequence of the accidental pathogen Legionella pneumophila.</title>
        <authorList>
            <person name="Chien M."/>
            <person name="Morozova I."/>
            <person name="Shi S."/>
            <person name="Sheng H."/>
            <person name="Chen J."/>
            <person name="Gomez S.M."/>
            <person name="Asamani G."/>
            <person name="Hill K."/>
            <person name="Nuara J."/>
            <person name="Feder M."/>
            <person name="Rineer J."/>
            <person name="Greenberg J.J."/>
            <person name="Steshenko V."/>
            <person name="Park S.H."/>
            <person name="Zhao B."/>
            <person name="Teplitskaya E."/>
            <person name="Edwards J.R."/>
            <person name="Pampou S."/>
            <person name="Georghiou A."/>
            <person name="Chou I.-C."/>
            <person name="Iannuccilli W."/>
            <person name="Ulz M.E."/>
            <person name="Kim D.H."/>
            <person name="Geringer-Sameth A."/>
            <person name="Goldsberry C."/>
            <person name="Morozov P."/>
            <person name="Fischer S.G."/>
            <person name="Segal G."/>
            <person name="Qu X."/>
            <person name="Rzhetsky A."/>
            <person name="Zhang P."/>
            <person name="Cayanis E."/>
            <person name="De Jong P.J."/>
            <person name="Ju J."/>
            <person name="Kalachikov S."/>
            <person name="Shuman H.A."/>
            <person name="Russo J.J."/>
        </authorList>
    </citation>
    <scope>NUCLEOTIDE SEQUENCE [LARGE SCALE GENOMIC DNA]</scope>
    <source>
        <strain>Philadelphia 1 / ATCC 33152 / DSM 7513</strain>
    </source>
</reference>
<evidence type="ECO:0000255" key="1">
    <source>
        <dbReference type="HAMAP-Rule" id="MF_01456"/>
    </source>
</evidence>
<accession>Q5ZRU8</accession>
<proteinExistence type="inferred from homology"/>
<dbReference type="EC" id="7.1.1.-" evidence="1"/>
<dbReference type="EMBL" id="AE017354">
    <property type="protein sequence ID" value="AAU28829.1"/>
    <property type="molecule type" value="Genomic_DNA"/>
</dbReference>
<dbReference type="RefSeq" id="WP_010948468.1">
    <property type="nucleotide sequence ID" value="NC_002942.5"/>
</dbReference>
<dbReference type="RefSeq" id="YP_096776.1">
    <property type="nucleotide sequence ID" value="NC_002942.5"/>
</dbReference>
<dbReference type="SMR" id="Q5ZRU8"/>
<dbReference type="STRING" id="272624.lpg2779"/>
<dbReference type="PaxDb" id="272624-lpg2779"/>
<dbReference type="GeneID" id="57036777"/>
<dbReference type="KEGG" id="lpn:lpg2779"/>
<dbReference type="PATRIC" id="fig|272624.6.peg.2960"/>
<dbReference type="eggNOG" id="COG0713">
    <property type="taxonomic scope" value="Bacteria"/>
</dbReference>
<dbReference type="HOGENOM" id="CLU_144724_2_0_6"/>
<dbReference type="OrthoDB" id="9801357at2"/>
<dbReference type="Proteomes" id="UP000000609">
    <property type="component" value="Chromosome"/>
</dbReference>
<dbReference type="GO" id="GO:0030964">
    <property type="term" value="C:NADH dehydrogenase complex"/>
    <property type="evidence" value="ECO:0007669"/>
    <property type="project" value="TreeGrafter"/>
</dbReference>
<dbReference type="GO" id="GO:0005886">
    <property type="term" value="C:plasma membrane"/>
    <property type="evidence" value="ECO:0007669"/>
    <property type="project" value="UniProtKB-SubCell"/>
</dbReference>
<dbReference type="GO" id="GO:0050136">
    <property type="term" value="F:NADH:ubiquinone reductase (non-electrogenic) activity"/>
    <property type="evidence" value="ECO:0007669"/>
    <property type="project" value="UniProtKB-UniRule"/>
</dbReference>
<dbReference type="GO" id="GO:0048038">
    <property type="term" value="F:quinone binding"/>
    <property type="evidence" value="ECO:0007669"/>
    <property type="project" value="UniProtKB-KW"/>
</dbReference>
<dbReference type="GO" id="GO:0042773">
    <property type="term" value="P:ATP synthesis coupled electron transport"/>
    <property type="evidence" value="ECO:0007669"/>
    <property type="project" value="InterPro"/>
</dbReference>
<dbReference type="FunFam" id="1.10.287.3510:FF:000001">
    <property type="entry name" value="NADH-quinone oxidoreductase subunit K"/>
    <property type="match status" value="1"/>
</dbReference>
<dbReference type="Gene3D" id="1.10.287.3510">
    <property type="match status" value="1"/>
</dbReference>
<dbReference type="HAMAP" id="MF_01456">
    <property type="entry name" value="NDH1_NuoK"/>
    <property type="match status" value="1"/>
</dbReference>
<dbReference type="InterPro" id="IPR001133">
    <property type="entry name" value="NADH_UbQ_OxRdtase_chain4L/K"/>
</dbReference>
<dbReference type="InterPro" id="IPR039428">
    <property type="entry name" value="NUOK/Mnh_C1-like"/>
</dbReference>
<dbReference type="NCBIfam" id="NF004320">
    <property type="entry name" value="PRK05715.1-2"/>
    <property type="match status" value="1"/>
</dbReference>
<dbReference type="NCBIfam" id="NF004321">
    <property type="entry name" value="PRK05715.1-3"/>
    <property type="match status" value="1"/>
</dbReference>
<dbReference type="NCBIfam" id="NF004323">
    <property type="entry name" value="PRK05715.1-5"/>
    <property type="match status" value="1"/>
</dbReference>
<dbReference type="PANTHER" id="PTHR11434:SF21">
    <property type="entry name" value="NADH DEHYDROGENASE SUBUNIT 4L-RELATED"/>
    <property type="match status" value="1"/>
</dbReference>
<dbReference type="PANTHER" id="PTHR11434">
    <property type="entry name" value="NADH-UBIQUINONE OXIDOREDUCTASE SUBUNIT ND4L"/>
    <property type="match status" value="1"/>
</dbReference>
<dbReference type="Pfam" id="PF00420">
    <property type="entry name" value="Oxidored_q2"/>
    <property type="match status" value="1"/>
</dbReference>
<name>NUOK_LEGPH</name>
<keyword id="KW-0997">Cell inner membrane</keyword>
<keyword id="KW-1003">Cell membrane</keyword>
<keyword id="KW-0472">Membrane</keyword>
<keyword id="KW-0520">NAD</keyword>
<keyword id="KW-0874">Quinone</keyword>
<keyword id="KW-1185">Reference proteome</keyword>
<keyword id="KW-1278">Translocase</keyword>
<keyword id="KW-0812">Transmembrane</keyword>
<keyword id="KW-1133">Transmembrane helix</keyword>
<keyword id="KW-0813">Transport</keyword>
<keyword id="KW-0830">Ubiquinone</keyword>
<comment type="function">
    <text evidence="1">NDH-1 shuttles electrons from NADH, via FMN and iron-sulfur (Fe-S) centers, to quinones in the respiratory chain. The immediate electron acceptor for the enzyme in this species is believed to be ubiquinone. Couples the redox reaction to proton translocation (for every two electrons transferred, four hydrogen ions are translocated across the cytoplasmic membrane), and thus conserves the redox energy in a proton gradient.</text>
</comment>
<comment type="catalytic activity">
    <reaction evidence="1">
        <text>a quinone + NADH + 5 H(+)(in) = a quinol + NAD(+) + 4 H(+)(out)</text>
        <dbReference type="Rhea" id="RHEA:57888"/>
        <dbReference type="ChEBI" id="CHEBI:15378"/>
        <dbReference type="ChEBI" id="CHEBI:24646"/>
        <dbReference type="ChEBI" id="CHEBI:57540"/>
        <dbReference type="ChEBI" id="CHEBI:57945"/>
        <dbReference type="ChEBI" id="CHEBI:132124"/>
    </reaction>
</comment>
<comment type="subunit">
    <text evidence="1">NDH-1 is composed of 14 different subunits. Subunits NuoA, H, J, K, L, M, N constitute the membrane sector of the complex.</text>
</comment>
<comment type="subcellular location">
    <subcellularLocation>
        <location evidence="1">Cell inner membrane</location>
        <topology evidence="1">Multi-pass membrane protein</topology>
    </subcellularLocation>
</comment>
<comment type="similarity">
    <text evidence="1">Belongs to the complex I subunit 4L family.</text>
</comment>